<keyword id="KW-1185">Reference proteome</keyword>
<proteinExistence type="predicted"/>
<feature type="chain" id="PRO_0000165109" description="Uncharacterized 7.0 kDa protein in Gp55-nrdG intergenic region">
    <location>
        <begin position="1"/>
        <end position="60"/>
    </location>
</feature>
<dbReference type="EMBL" id="Y00122">
    <property type="protein sequence ID" value="CAA68315.1"/>
    <property type="molecule type" value="Genomic_DNA"/>
</dbReference>
<dbReference type="EMBL" id="AF158101">
    <property type="protein sequence ID" value="AAD42497.1"/>
    <property type="molecule type" value="Genomic_DNA"/>
</dbReference>
<dbReference type="PIR" id="A30292">
    <property type="entry name" value="ZBBPT9"/>
</dbReference>
<dbReference type="RefSeq" id="NP_049685.1">
    <property type="nucleotide sequence ID" value="NC_000866.4"/>
</dbReference>
<dbReference type="GeneID" id="1258564"/>
<dbReference type="KEGG" id="vg:1258564"/>
<dbReference type="OrthoDB" id="25060at10239"/>
<dbReference type="Proteomes" id="UP000009087">
    <property type="component" value="Segment"/>
</dbReference>
<name>Y04F_BPT4</name>
<reference key="1">
    <citation type="journal article" date="1987" name="Nucleic Acids Res.">
        <title>Nucleotide sequence and primary structures of gene products coded for by the T4 genome between map positions 48.266 kb and 39.166 kb.</title>
        <authorList>
            <person name="Tomaschewski J."/>
            <person name="Rueger W."/>
        </authorList>
    </citation>
    <scope>NUCLEOTIDE SEQUENCE [GENOMIC DNA]</scope>
    <source>
        <strain>C</strain>
    </source>
</reference>
<reference key="2">
    <citation type="journal article" date="2003" name="Microbiol. Mol. Biol. Rev.">
        <title>Bacteriophage T4 genome.</title>
        <authorList>
            <person name="Miller E.S."/>
            <person name="Kutter E."/>
            <person name="Mosig G."/>
            <person name="Arisaka F."/>
            <person name="Kunisawa T."/>
            <person name="Ruger W."/>
        </authorList>
    </citation>
    <scope>NUCLEOTIDE SEQUENCE [LARGE SCALE GENOMIC DNA]</scope>
</reference>
<protein>
    <recommendedName>
        <fullName>Uncharacterized 7.0 kDa protein in Gp55-nrdG intergenic region</fullName>
    </recommendedName>
</protein>
<organism>
    <name type="scientific">Enterobacteria phage T4</name>
    <name type="common">Bacteriophage T4</name>
    <dbReference type="NCBI Taxonomy" id="10665"/>
    <lineage>
        <taxon>Viruses</taxon>
        <taxon>Duplodnaviria</taxon>
        <taxon>Heunggongvirae</taxon>
        <taxon>Uroviricota</taxon>
        <taxon>Caudoviricetes</taxon>
        <taxon>Straboviridae</taxon>
        <taxon>Tevenvirinae</taxon>
        <taxon>Tequatrovirus</taxon>
    </lineage>
</organism>
<organismHost>
    <name type="scientific">Escherichia coli</name>
    <dbReference type="NCBI Taxonomy" id="562"/>
</organismHost>
<sequence>MVVVDKEIKKGQYYLVNGNVVRVTYVNGFDVYYLILKLHKRMICDRAVFSSVAKEIKLHG</sequence>
<accession>P07078</accession>
<gene>
    <name type="primary">y04F</name>
    <name type="synonym">55.6</name>
</gene>